<reference key="1">
    <citation type="submission" date="2007-03" db="EMBL/GenBank/DDBJ databases">
        <title>Sequencing analysis of Crucihimalaya wallichii chloroplast DNA.</title>
        <authorList>
            <person name="Hosouchi T."/>
            <person name="Tsuruoka H."/>
            <person name="Kotani H."/>
        </authorList>
    </citation>
    <scope>NUCLEOTIDE SEQUENCE [LARGE SCALE GENOMIC DNA]</scope>
</reference>
<gene>
    <name evidence="1" type="primary">rps11</name>
</gene>
<sequence length="138" mass="15024">MAKPILRIGSRKNTRSGSRKNVRRIPKGVIHVQASFNNTIVTVTDVRGRVISWSSAGTCGFRGTRRGTPFAAQTAAGNAIRAVVDQGMQRAEVRIKGPGLGRDAALRAIRRSGILLSFVRDVTPMPHNGCRPPKKRRV</sequence>
<organism>
    <name type="scientific">Crucihimalaya wallichii</name>
    <name type="common">Rock-cress</name>
    <name type="synonym">Arabidopsis campestris</name>
    <dbReference type="NCBI Taxonomy" id="78192"/>
    <lineage>
        <taxon>Eukaryota</taxon>
        <taxon>Viridiplantae</taxon>
        <taxon>Streptophyta</taxon>
        <taxon>Embryophyta</taxon>
        <taxon>Tracheophyta</taxon>
        <taxon>Spermatophyta</taxon>
        <taxon>Magnoliopsida</taxon>
        <taxon>eudicotyledons</taxon>
        <taxon>Gunneridae</taxon>
        <taxon>Pentapetalae</taxon>
        <taxon>rosids</taxon>
        <taxon>malvids</taxon>
        <taxon>Brassicales</taxon>
        <taxon>Brassicaceae</taxon>
        <taxon>Crucihimalayeae</taxon>
        <taxon>Crucihimalaya</taxon>
    </lineage>
</organism>
<accession>A4QKW4</accession>
<dbReference type="EMBL" id="AP009372">
    <property type="protein sequence ID" value="BAF50319.1"/>
    <property type="molecule type" value="Genomic_DNA"/>
</dbReference>
<dbReference type="RefSeq" id="YP_001123495.1">
    <property type="nucleotide sequence ID" value="NC_009271.1"/>
</dbReference>
<dbReference type="SMR" id="A4QKW4"/>
<dbReference type="GeneID" id="4962760"/>
<dbReference type="GO" id="GO:0009507">
    <property type="term" value="C:chloroplast"/>
    <property type="evidence" value="ECO:0007669"/>
    <property type="project" value="UniProtKB-SubCell"/>
</dbReference>
<dbReference type="GO" id="GO:1990904">
    <property type="term" value="C:ribonucleoprotein complex"/>
    <property type="evidence" value="ECO:0007669"/>
    <property type="project" value="UniProtKB-KW"/>
</dbReference>
<dbReference type="GO" id="GO:0005840">
    <property type="term" value="C:ribosome"/>
    <property type="evidence" value="ECO:0007669"/>
    <property type="project" value="UniProtKB-KW"/>
</dbReference>
<dbReference type="GO" id="GO:0019843">
    <property type="term" value="F:rRNA binding"/>
    <property type="evidence" value="ECO:0007669"/>
    <property type="project" value="UniProtKB-UniRule"/>
</dbReference>
<dbReference type="GO" id="GO:0003735">
    <property type="term" value="F:structural constituent of ribosome"/>
    <property type="evidence" value="ECO:0007669"/>
    <property type="project" value="InterPro"/>
</dbReference>
<dbReference type="GO" id="GO:0006412">
    <property type="term" value="P:translation"/>
    <property type="evidence" value="ECO:0007669"/>
    <property type="project" value="UniProtKB-UniRule"/>
</dbReference>
<dbReference type="FunFam" id="3.30.420.80:FF:000003">
    <property type="entry name" value="30S ribosomal protein S11, chloroplastic"/>
    <property type="match status" value="1"/>
</dbReference>
<dbReference type="Gene3D" id="3.30.420.80">
    <property type="entry name" value="Ribosomal protein S11"/>
    <property type="match status" value="1"/>
</dbReference>
<dbReference type="HAMAP" id="MF_01310">
    <property type="entry name" value="Ribosomal_uS11"/>
    <property type="match status" value="1"/>
</dbReference>
<dbReference type="InterPro" id="IPR001971">
    <property type="entry name" value="Ribosomal_uS11"/>
</dbReference>
<dbReference type="InterPro" id="IPR019981">
    <property type="entry name" value="Ribosomal_uS11_bac-type"/>
</dbReference>
<dbReference type="InterPro" id="IPR018102">
    <property type="entry name" value="Ribosomal_uS11_CS"/>
</dbReference>
<dbReference type="InterPro" id="IPR036967">
    <property type="entry name" value="Ribosomal_uS11_sf"/>
</dbReference>
<dbReference type="NCBIfam" id="NF003698">
    <property type="entry name" value="PRK05309.1"/>
    <property type="match status" value="1"/>
</dbReference>
<dbReference type="NCBIfam" id="TIGR03632">
    <property type="entry name" value="uS11_bact"/>
    <property type="match status" value="1"/>
</dbReference>
<dbReference type="PANTHER" id="PTHR11759">
    <property type="entry name" value="40S RIBOSOMAL PROTEIN S14/30S RIBOSOMAL PROTEIN S11"/>
    <property type="match status" value="1"/>
</dbReference>
<dbReference type="Pfam" id="PF00411">
    <property type="entry name" value="Ribosomal_S11"/>
    <property type="match status" value="1"/>
</dbReference>
<dbReference type="PIRSF" id="PIRSF002131">
    <property type="entry name" value="Ribosomal_S11"/>
    <property type="match status" value="1"/>
</dbReference>
<dbReference type="SUPFAM" id="SSF53137">
    <property type="entry name" value="Translational machinery components"/>
    <property type="match status" value="1"/>
</dbReference>
<dbReference type="PROSITE" id="PS00054">
    <property type="entry name" value="RIBOSOMAL_S11"/>
    <property type="match status" value="1"/>
</dbReference>
<name>RR11_CRUWA</name>
<comment type="subunit">
    <text evidence="1">Part of the 30S ribosomal subunit.</text>
</comment>
<comment type="subcellular location">
    <subcellularLocation>
        <location>Plastid</location>
        <location>Chloroplast</location>
    </subcellularLocation>
</comment>
<comment type="similarity">
    <text evidence="1">Belongs to the universal ribosomal protein uS11 family.</text>
</comment>
<keyword id="KW-0150">Chloroplast</keyword>
<keyword id="KW-0934">Plastid</keyword>
<keyword id="KW-0687">Ribonucleoprotein</keyword>
<keyword id="KW-0689">Ribosomal protein</keyword>
<keyword id="KW-0694">RNA-binding</keyword>
<keyword id="KW-0699">rRNA-binding</keyword>
<geneLocation type="chloroplast"/>
<protein>
    <recommendedName>
        <fullName evidence="1">Small ribosomal subunit protein uS11c</fullName>
    </recommendedName>
    <alternativeName>
        <fullName evidence="3">30S ribosomal protein S11, chloroplastic</fullName>
    </alternativeName>
</protein>
<evidence type="ECO:0000255" key="1">
    <source>
        <dbReference type="HAMAP-Rule" id="MF_01310"/>
    </source>
</evidence>
<evidence type="ECO:0000256" key="2">
    <source>
        <dbReference type="SAM" id="MobiDB-lite"/>
    </source>
</evidence>
<evidence type="ECO:0000305" key="3"/>
<proteinExistence type="inferred from homology"/>
<feature type="chain" id="PRO_0000294915" description="Small ribosomal subunit protein uS11c">
    <location>
        <begin position="1"/>
        <end position="138"/>
    </location>
</feature>
<feature type="region of interest" description="Disordered" evidence="2">
    <location>
        <begin position="1"/>
        <end position="23"/>
    </location>
</feature>
<feature type="compositionally biased region" description="Basic residues" evidence="2">
    <location>
        <begin position="9"/>
        <end position="23"/>
    </location>
</feature>